<reference key="1">
    <citation type="journal article" date="2005" name="Science">
        <title>The transcriptional landscape of the mammalian genome.</title>
        <authorList>
            <person name="Carninci P."/>
            <person name="Kasukawa T."/>
            <person name="Katayama S."/>
            <person name="Gough J."/>
            <person name="Frith M.C."/>
            <person name="Maeda N."/>
            <person name="Oyama R."/>
            <person name="Ravasi T."/>
            <person name="Lenhard B."/>
            <person name="Wells C."/>
            <person name="Kodzius R."/>
            <person name="Shimokawa K."/>
            <person name="Bajic V.B."/>
            <person name="Brenner S.E."/>
            <person name="Batalov S."/>
            <person name="Forrest A.R."/>
            <person name="Zavolan M."/>
            <person name="Davis M.J."/>
            <person name="Wilming L.G."/>
            <person name="Aidinis V."/>
            <person name="Allen J.E."/>
            <person name="Ambesi-Impiombato A."/>
            <person name="Apweiler R."/>
            <person name="Aturaliya R.N."/>
            <person name="Bailey T.L."/>
            <person name="Bansal M."/>
            <person name="Baxter L."/>
            <person name="Beisel K.W."/>
            <person name="Bersano T."/>
            <person name="Bono H."/>
            <person name="Chalk A.M."/>
            <person name="Chiu K.P."/>
            <person name="Choudhary V."/>
            <person name="Christoffels A."/>
            <person name="Clutterbuck D.R."/>
            <person name="Crowe M.L."/>
            <person name="Dalla E."/>
            <person name="Dalrymple B.P."/>
            <person name="de Bono B."/>
            <person name="Della Gatta G."/>
            <person name="di Bernardo D."/>
            <person name="Down T."/>
            <person name="Engstrom P."/>
            <person name="Fagiolini M."/>
            <person name="Faulkner G."/>
            <person name="Fletcher C.F."/>
            <person name="Fukushima T."/>
            <person name="Furuno M."/>
            <person name="Futaki S."/>
            <person name="Gariboldi M."/>
            <person name="Georgii-Hemming P."/>
            <person name="Gingeras T.R."/>
            <person name="Gojobori T."/>
            <person name="Green R.E."/>
            <person name="Gustincich S."/>
            <person name="Harbers M."/>
            <person name="Hayashi Y."/>
            <person name="Hensch T.K."/>
            <person name="Hirokawa N."/>
            <person name="Hill D."/>
            <person name="Huminiecki L."/>
            <person name="Iacono M."/>
            <person name="Ikeo K."/>
            <person name="Iwama A."/>
            <person name="Ishikawa T."/>
            <person name="Jakt M."/>
            <person name="Kanapin A."/>
            <person name="Katoh M."/>
            <person name="Kawasawa Y."/>
            <person name="Kelso J."/>
            <person name="Kitamura H."/>
            <person name="Kitano H."/>
            <person name="Kollias G."/>
            <person name="Krishnan S.P."/>
            <person name="Kruger A."/>
            <person name="Kummerfeld S.K."/>
            <person name="Kurochkin I.V."/>
            <person name="Lareau L.F."/>
            <person name="Lazarevic D."/>
            <person name="Lipovich L."/>
            <person name="Liu J."/>
            <person name="Liuni S."/>
            <person name="McWilliam S."/>
            <person name="Madan Babu M."/>
            <person name="Madera M."/>
            <person name="Marchionni L."/>
            <person name="Matsuda H."/>
            <person name="Matsuzawa S."/>
            <person name="Miki H."/>
            <person name="Mignone F."/>
            <person name="Miyake S."/>
            <person name="Morris K."/>
            <person name="Mottagui-Tabar S."/>
            <person name="Mulder N."/>
            <person name="Nakano N."/>
            <person name="Nakauchi H."/>
            <person name="Ng P."/>
            <person name="Nilsson R."/>
            <person name="Nishiguchi S."/>
            <person name="Nishikawa S."/>
            <person name="Nori F."/>
            <person name="Ohara O."/>
            <person name="Okazaki Y."/>
            <person name="Orlando V."/>
            <person name="Pang K.C."/>
            <person name="Pavan W.J."/>
            <person name="Pavesi G."/>
            <person name="Pesole G."/>
            <person name="Petrovsky N."/>
            <person name="Piazza S."/>
            <person name="Reed J."/>
            <person name="Reid J.F."/>
            <person name="Ring B.Z."/>
            <person name="Ringwald M."/>
            <person name="Rost B."/>
            <person name="Ruan Y."/>
            <person name="Salzberg S.L."/>
            <person name="Sandelin A."/>
            <person name="Schneider C."/>
            <person name="Schoenbach C."/>
            <person name="Sekiguchi K."/>
            <person name="Semple C.A."/>
            <person name="Seno S."/>
            <person name="Sessa L."/>
            <person name="Sheng Y."/>
            <person name="Shibata Y."/>
            <person name="Shimada H."/>
            <person name="Shimada K."/>
            <person name="Silva D."/>
            <person name="Sinclair B."/>
            <person name="Sperling S."/>
            <person name="Stupka E."/>
            <person name="Sugiura K."/>
            <person name="Sultana R."/>
            <person name="Takenaka Y."/>
            <person name="Taki K."/>
            <person name="Tammoja K."/>
            <person name="Tan S.L."/>
            <person name="Tang S."/>
            <person name="Taylor M.S."/>
            <person name="Tegner J."/>
            <person name="Teichmann S.A."/>
            <person name="Ueda H.R."/>
            <person name="van Nimwegen E."/>
            <person name="Verardo R."/>
            <person name="Wei C.L."/>
            <person name="Yagi K."/>
            <person name="Yamanishi H."/>
            <person name="Zabarovsky E."/>
            <person name="Zhu S."/>
            <person name="Zimmer A."/>
            <person name="Hide W."/>
            <person name="Bult C."/>
            <person name="Grimmond S.M."/>
            <person name="Teasdale R.D."/>
            <person name="Liu E.T."/>
            <person name="Brusic V."/>
            <person name="Quackenbush J."/>
            <person name="Wahlestedt C."/>
            <person name="Mattick J.S."/>
            <person name="Hume D.A."/>
            <person name="Kai C."/>
            <person name="Sasaki D."/>
            <person name="Tomaru Y."/>
            <person name="Fukuda S."/>
            <person name="Kanamori-Katayama M."/>
            <person name="Suzuki M."/>
            <person name="Aoki J."/>
            <person name="Arakawa T."/>
            <person name="Iida J."/>
            <person name="Imamura K."/>
            <person name="Itoh M."/>
            <person name="Kato T."/>
            <person name="Kawaji H."/>
            <person name="Kawagashira N."/>
            <person name="Kawashima T."/>
            <person name="Kojima M."/>
            <person name="Kondo S."/>
            <person name="Konno H."/>
            <person name="Nakano K."/>
            <person name="Ninomiya N."/>
            <person name="Nishio T."/>
            <person name="Okada M."/>
            <person name="Plessy C."/>
            <person name="Shibata K."/>
            <person name="Shiraki T."/>
            <person name="Suzuki S."/>
            <person name="Tagami M."/>
            <person name="Waki K."/>
            <person name="Watahiki A."/>
            <person name="Okamura-Oho Y."/>
            <person name="Suzuki H."/>
            <person name="Kawai J."/>
            <person name="Hayashizaki Y."/>
        </authorList>
    </citation>
    <scope>NUCLEOTIDE SEQUENCE [LARGE SCALE MRNA]</scope>
    <source>
        <strain>C57BL/6J</strain>
        <tissue>Testis</tissue>
    </source>
</reference>
<reference key="2">
    <citation type="journal article" date="2009" name="PLoS Biol.">
        <title>Lineage-specific biology revealed by a finished genome assembly of the mouse.</title>
        <authorList>
            <person name="Church D.M."/>
            <person name="Goodstadt L."/>
            <person name="Hillier L.W."/>
            <person name="Zody M.C."/>
            <person name="Goldstein S."/>
            <person name="She X."/>
            <person name="Bult C.J."/>
            <person name="Agarwala R."/>
            <person name="Cherry J.L."/>
            <person name="DiCuccio M."/>
            <person name="Hlavina W."/>
            <person name="Kapustin Y."/>
            <person name="Meric P."/>
            <person name="Maglott D."/>
            <person name="Birtle Z."/>
            <person name="Marques A.C."/>
            <person name="Graves T."/>
            <person name="Zhou S."/>
            <person name="Teague B."/>
            <person name="Potamousis K."/>
            <person name="Churas C."/>
            <person name="Place M."/>
            <person name="Herschleb J."/>
            <person name="Runnheim R."/>
            <person name="Forrest D."/>
            <person name="Amos-Landgraf J."/>
            <person name="Schwartz D.C."/>
            <person name="Cheng Z."/>
            <person name="Lindblad-Toh K."/>
            <person name="Eichler E.E."/>
            <person name="Ponting C.P."/>
        </authorList>
    </citation>
    <scope>NUCLEOTIDE SEQUENCE [LARGE SCALE GENOMIC DNA]</scope>
    <source>
        <strain>C57BL/6J</strain>
    </source>
</reference>
<organism>
    <name type="scientific">Mus musculus</name>
    <name type="common">Mouse</name>
    <dbReference type="NCBI Taxonomy" id="10090"/>
    <lineage>
        <taxon>Eukaryota</taxon>
        <taxon>Metazoa</taxon>
        <taxon>Chordata</taxon>
        <taxon>Craniata</taxon>
        <taxon>Vertebrata</taxon>
        <taxon>Euteleostomi</taxon>
        <taxon>Mammalia</taxon>
        <taxon>Eutheria</taxon>
        <taxon>Euarchontoglires</taxon>
        <taxon>Glires</taxon>
        <taxon>Rodentia</taxon>
        <taxon>Myomorpha</taxon>
        <taxon>Muroidea</taxon>
        <taxon>Muridae</taxon>
        <taxon>Murinae</taxon>
        <taxon>Mus</taxon>
        <taxon>Mus</taxon>
    </lineage>
</organism>
<gene>
    <name type="primary">Antxrl</name>
</gene>
<proteinExistence type="evidence at transcript level"/>
<dbReference type="EMBL" id="AK077206">
    <property type="protein sequence ID" value="BAC36683.1"/>
    <property type="molecule type" value="mRNA"/>
</dbReference>
<dbReference type="EMBL" id="AC164099">
    <property type="status" value="NOT_ANNOTATED_CDS"/>
    <property type="molecule type" value="Genomic_DNA"/>
</dbReference>
<dbReference type="CCDS" id="CCDS26931.1"/>
<dbReference type="RefSeq" id="NP_766396.2">
    <property type="nucleotide sequence ID" value="NM_172808.2"/>
</dbReference>
<dbReference type="SMR" id="Q8BVM2"/>
<dbReference type="STRING" id="10090.ENSMUSP00000052816"/>
<dbReference type="PhosphoSitePlus" id="Q8BVM2"/>
<dbReference type="PaxDb" id="10090-ENSMUSP00000052816"/>
<dbReference type="ProteomicsDB" id="296317"/>
<dbReference type="DNASU" id="239029"/>
<dbReference type="Ensembl" id="ENSMUST00000058725.5">
    <property type="protein sequence ID" value="ENSMUSP00000052816.4"/>
    <property type="gene ID" value="ENSMUSG00000047441.5"/>
</dbReference>
<dbReference type="GeneID" id="239029"/>
<dbReference type="KEGG" id="mmu:239029"/>
<dbReference type="UCSC" id="uc007tai.1">
    <property type="organism name" value="mouse"/>
</dbReference>
<dbReference type="AGR" id="MGI:1925726"/>
<dbReference type="CTD" id="195977"/>
<dbReference type="MGI" id="MGI:1925726">
    <property type="gene designation" value="Antxrl"/>
</dbReference>
<dbReference type="VEuPathDB" id="HostDB:ENSMUSG00000047441"/>
<dbReference type="eggNOG" id="ENOG502QSKR">
    <property type="taxonomic scope" value="Eukaryota"/>
</dbReference>
<dbReference type="GeneTree" id="ENSGT00940000157727"/>
<dbReference type="HOGENOM" id="CLU_029760_1_0_1"/>
<dbReference type="InParanoid" id="Q8BVM2"/>
<dbReference type="OMA" id="LLLCCTW"/>
<dbReference type="OrthoDB" id="9634661at2759"/>
<dbReference type="PhylomeDB" id="Q8BVM2"/>
<dbReference type="TreeFam" id="TF328943"/>
<dbReference type="BioGRID-ORCS" id="239029">
    <property type="hits" value="2 hits in 75 CRISPR screens"/>
</dbReference>
<dbReference type="PRO" id="PR:Q8BVM2"/>
<dbReference type="Proteomes" id="UP000000589">
    <property type="component" value="Chromosome 14"/>
</dbReference>
<dbReference type="RNAct" id="Q8BVM2">
    <property type="molecule type" value="protein"/>
</dbReference>
<dbReference type="Bgee" id="ENSMUSG00000047441">
    <property type="expression patterns" value="Expressed in testis and 13 other cell types or tissues"/>
</dbReference>
<dbReference type="ExpressionAtlas" id="Q8BVM2">
    <property type="expression patterns" value="baseline and differential"/>
</dbReference>
<dbReference type="GO" id="GO:0016020">
    <property type="term" value="C:membrane"/>
    <property type="evidence" value="ECO:0007669"/>
    <property type="project" value="UniProtKB-SubCell"/>
</dbReference>
<dbReference type="GO" id="GO:0046872">
    <property type="term" value="F:metal ion binding"/>
    <property type="evidence" value="ECO:0007669"/>
    <property type="project" value="UniProtKB-KW"/>
</dbReference>
<dbReference type="GO" id="GO:0038023">
    <property type="term" value="F:signaling receptor activity"/>
    <property type="evidence" value="ECO:0007669"/>
    <property type="project" value="InterPro"/>
</dbReference>
<dbReference type="CDD" id="cd01474">
    <property type="entry name" value="vWA_ATR"/>
    <property type="match status" value="1"/>
</dbReference>
<dbReference type="FunFam" id="3.40.50.410:FF:000024">
    <property type="entry name" value="Anthrax toxin receptor"/>
    <property type="match status" value="1"/>
</dbReference>
<dbReference type="Gene3D" id="3.40.50.410">
    <property type="entry name" value="von Willebrand factor, type A domain"/>
    <property type="match status" value="1"/>
</dbReference>
<dbReference type="InterPro" id="IPR008400">
    <property type="entry name" value="Anthrax_toxin_rcpt_extracel"/>
</dbReference>
<dbReference type="InterPro" id="IPR002035">
    <property type="entry name" value="VWF_A"/>
</dbReference>
<dbReference type="InterPro" id="IPR036465">
    <property type="entry name" value="vWFA_dom_sf"/>
</dbReference>
<dbReference type="PANTHER" id="PTHR16059">
    <property type="entry name" value="ANTHRAX TOXIN RECEPTOR"/>
    <property type="match status" value="1"/>
</dbReference>
<dbReference type="PANTHER" id="PTHR16059:SF16">
    <property type="entry name" value="ANTHRAX TOXIN RECEPTOR-LIKE"/>
    <property type="match status" value="1"/>
</dbReference>
<dbReference type="Pfam" id="PF05587">
    <property type="entry name" value="Anth_Ig"/>
    <property type="match status" value="1"/>
</dbReference>
<dbReference type="Pfam" id="PF00092">
    <property type="entry name" value="VWA"/>
    <property type="match status" value="1"/>
</dbReference>
<dbReference type="SMART" id="SM00327">
    <property type="entry name" value="VWA"/>
    <property type="match status" value="1"/>
</dbReference>
<dbReference type="SUPFAM" id="SSF53300">
    <property type="entry name" value="vWA-like"/>
    <property type="match status" value="1"/>
</dbReference>
<dbReference type="PROSITE" id="PS50234">
    <property type="entry name" value="VWFA"/>
    <property type="match status" value="1"/>
</dbReference>
<comment type="subcellular location">
    <subcellularLocation>
        <location evidence="5">Membrane</location>
        <topology evidence="5">Single-pass type I membrane protein</topology>
    </subcellularLocation>
</comment>
<comment type="similarity">
    <text evidence="5">Belongs to the ATR family.</text>
</comment>
<name>ANTRL_MOUSE</name>
<sequence>MMSHSPSMPCSALFLLLLLLLPPTFKGGSLRYHGPGWKLFHRLSKGFRSSHQRQTQQMRQNVPQGQSGDDCQGIFDLYLVLDKSGSVADNWIHIYSFAEGLVKKFTNPNLRISIITYSTEAEVILPLTSDSKEINKSLLVLKNIVPQGLTHMQKGLRKANEQIRKSTLGGRIVNSVIIALTDGLLLLKPYLDTMEEAKKARRMGAIVYTVGVFMYSKQQLVNIAGDPDRCFGVDEGFSALEGVVDPLTSKSCTEILSVQPTYVCAKDFYQVNISGHGLNNTSNMKQVICRFKFSDSKVVDESPSDMNEHSITCPGPKIKHTGEDVSLQVSLNNGISFIGNKLIITSTNCWSPRASQGIVFKRTWLMFLPVLLVTLLLLCCTWKLCIKPKKLPPPPPKPEKEPEEESPPPSSPPAPGRGPGPGPSAGPGPGPGPSPGSGPARSPVPARPPPAPLPANTNPTVIVACCGCGNRGMQGNLDTCCDYFHPSCHPMPLVWCHPKAQGGYPGFAVMKPSCSQASCRQKHCLCSNRDCFHLAEPPYPTRIVFQPNEKYFSITQSHYSPKIRFQTNQESLPVAQTLCSKMCSPPNQECYTFKSPQSPYQARYTKSPARMLPLLPPHTRQSLESLCHTYPFPPISKGPKF</sequence>
<evidence type="ECO:0000250" key="1"/>
<evidence type="ECO:0000255" key="2"/>
<evidence type="ECO:0000255" key="3">
    <source>
        <dbReference type="PROSITE-ProRule" id="PRU00219"/>
    </source>
</evidence>
<evidence type="ECO:0000256" key="4">
    <source>
        <dbReference type="SAM" id="MobiDB-lite"/>
    </source>
</evidence>
<evidence type="ECO:0000305" key="5"/>
<feature type="signal peptide" evidence="2">
    <location>
        <begin position="1"/>
        <end position="27"/>
    </location>
</feature>
<feature type="chain" id="PRO_0000332168" description="Anthrax toxin receptor-like">
    <location>
        <begin position="28"/>
        <end position="641"/>
    </location>
</feature>
<feature type="topological domain" description="Extracellular" evidence="2">
    <location>
        <begin position="28"/>
        <end position="363"/>
    </location>
</feature>
<feature type="transmembrane region" description="Helical" evidence="2">
    <location>
        <begin position="364"/>
        <end position="384"/>
    </location>
</feature>
<feature type="topological domain" description="Cytoplasmic" evidence="2">
    <location>
        <begin position="385"/>
        <end position="641"/>
    </location>
</feature>
<feature type="domain" description="VWFA" evidence="3">
    <location>
        <begin position="76"/>
        <end position="247"/>
    </location>
</feature>
<feature type="region of interest" description="Disordered" evidence="4">
    <location>
        <begin position="391"/>
        <end position="455"/>
    </location>
</feature>
<feature type="compositionally biased region" description="Pro residues" evidence="4">
    <location>
        <begin position="407"/>
        <end position="436"/>
    </location>
</feature>
<feature type="binding site" evidence="1">
    <location>
        <position position="84"/>
    </location>
    <ligand>
        <name>a divalent metal cation</name>
        <dbReference type="ChEBI" id="CHEBI:60240"/>
    </ligand>
</feature>
<feature type="binding site" evidence="1">
    <location>
        <position position="86"/>
    </location>
    <ligand>
        <name>a divalent metal cation</name>
        <dbReference type="ChEBI" id="CHEBI:60240"/>
    </ligand>
</feature>
<feature type="binding site" evidence="1">
    <location>
        <position position="150"/>
    </location>
    <ligand>
        <name>a divalent metal cation</name>
        <dbReference type="ChEBI" id="CHEBI:60240"/>
    </ligand>
</feature>
<feature type="sequence conflict" description="In Ref. 1; BAC36683." evidence="5" ref="1">
    <original>N</original>
    <variation>S</variation>
    <location>
        <position position="143"/>
    </location>
</feature>
<accession>Q8BVM2</accession>
<accession>E9QNF3</accession>
<protein>
    <recommendedName>
        <fullName>Anthrax toxin receptor-like</fullName>
    </recommendedName>
</protein>
<keyword id="KW-0472">Membrane</keyword>
<keyword id="KW-0479">Metal-binding</keyword>
<keyword id="KW-1185">Reference proteome</keyword>
<keyword id="KW-0732">Signal</keyword>
<keyword id="KW-0812">Transmembrane</keyword>
<keyword id="KW-1133">Transmembrane helix</keyword>